<name>MECA_EXISA</name>
<dbReference type="EMBL" id="CP001615">
    <property type="protein sequence ID" value="ACQ71659.1"/>
    <property type="molecule type" value="Genomic_DNA"/>
</dbReference>
<dbReference type="RefSeq" id="WP_015881218.1">
    <property type="nucleotide sequence ID" value="NC_012673.1"/>
</dbReference>
<dbReference type="SMR" id="C4L574"/>
<dbReference type="STRING" id="360911.EAT1b_2745"/>
<dbReference type="KEGG" id="eat:EAT1b_2745"/>
<dbReference type="eggNOG" id="COG4862">
    <property type="taxonomic scope" value="Bacteria"/>
</dbReference>
<dbReference type="HOGENOM" id="CLU_071496_2_1_9"/>
<dbReference type="OrthoDB" id="2360201at2"/>
<dbReference type="Proteomes" id="UP000000716">
    <property type="component" value="Chromosome"/>
</dbReference>
<dbReference type="GO" id="GO:0030674">
    <property type="term" value="F:protein-macromolecule adaptor activity"/>
    <property type="evidence" value="ECO:0007669"/>
    <property type="project" value="UniProtKB-UniRule"/>
</dbReference>
<dbReference type="Gene3D" id="3.30.70.1950">
    <property type="match status" value="1"/>
</dbReference>
<dbReference type="HAMAP" id="MF_01124">
    <property type="entry name" value="MecA"/>
    <property type="match status" value="1"/>
</dbReference>
<dbReference type="InterPro" id="IPR038471">
    <property type="entry name" value="MecA_C_sf"/>
</dbReference>
<dbReference type="InterPro" id="IPR008681">
    <property type="entry name" value="Neg-reg_MecA"/>
</dbReference>
<dbReference type="NCBIfam" id="NF002644">
    <property type="entry name" value="PRK02315.1-5"/>
    <property type="match status" value="1"/>
</dbReference>
<dbReference type="PANTHER" id="PTHR39161">
    <property type="entry name" value="ADAPTER PROTEIN MECA"/>
    <property type="match status" value="1"/>
</dbReference>
<dbReference type="PANTHER" id="PTHR39161:SF1">
    <property type="entry name" value="ADAPTER PROTEIN MECA 1"/>
    <property type="match status" value="1"/>
</dbReference>
<dbReference type="Pfam" id="PF05389">
    <property type="entry name" value="MecA"/>
    <property type="match status" value="1"/>
</dbReference>
<dbReference type="PIRSF" id="PIRSF029008">
    <property type="entry name" value="MecA"/>
    <property type="match status" value="1"/>
</dbReference>
<gene>
    <name evidence="1" type="primary">mecA</name>
    <name type="ordered locus">EAT1b_2745</name>
</gene>
<evidence type="ECO:0000255" key="1">
    <source>
        <dbReference type="HAMAP-Rule" id="MF_01124"/>
    </source>
</evidence>
<organism>
    <name type="scientific">Exiguobacterium sp. (strain ATCC BAA-1283 / AT1b)</name>
    <dbReference type="NCBI Taxonomy" id="360911"/>
    <lineage>
        <taxon>Bacteria</taxon>
        <taxon>Bacillati</taxon>
        <taxon>Bacillota</taxon>
        <taxon>Bacilli</taxon>
        <taxon>Bacillales</taxon>
        <taxon>Bacillales Family XII. Incertae Sedis</taxon>
        <taxon>Exiguobacterium</taxon>
    </lineage>
</organism>
<feature type="chain" id="PRO_1000213624" description="Adapter protein MecA">
    <location>
        <begin position="1"/>
        <end position="218"/>
    </location>
</feature>
<reference key="1">
    <citation type="journal article" date="2011" name="J. Bacteriol.">
        <title>Complete genome sequence of the Thermophilic Bacterium Exiguobacterium sp. AT1b.</title>
        <authorList>
            <person name="Vishnivetskaya T.A."/>
            <person name="Lucas S."/>
            <person name="Copeland A."/>
            <person name="Lapidus A."/>
            <person name="Glavina del Rio T."/>
            <person name="Dalin E."/>
            <person name="Tice H."/>
            <person name="Bruce D.C."/>
            <person name="Goodwin L.A."/>
            <person name="Pitluck S."/>
            <person name="Saunders E."/>
            <person name="Brettin T."/>
            <person name="Detter C."/>
            <person name="Han C."/>
            <person name="Larimer F."/>
            <person name="Land M.L."/>
            <person name="Hauser L.J."/>
            <person name="Kyrpides N.C."/>
            <person name="Ovchinnikova G."/>
            <person name="Kathariou S."/>
            <person name="Ramaley R.F."/>
            <person name="Rodrigues D.F."/>
            <person name="Hendrix C."/>
            <person name="Richardson P."/>
            <person name="Tiedje J.M."/>
        </authorList>
    </citation>
    <scope>NUCLEOTIDE SEQUENCE [LARGE SCALE GENOMIC DNA]</scope>
    <source>
        <strain>ATCC BAA-1283 / AT1b</strain>
    </source>
</reference>
<proteinExistence type="inferred from homology"/>
<accession>C4L574</accession>
<comment type="function">
    <text evidence="1">Enables the recognition and targeting of unfolded and aggregated proteins to the ClpC protease or to other proteins involved in proteolysis.</text>
</comment>
<comment type="subunit">
    <text evidence="1">Homodimer.</text>
</comment>
<comment type="domain">
    <text>The N-terminal domain probably binds unfolded/aggregated proteins; the C-terminal domain interacts with ClpC.</text>
</comment>
<comment type="similarity">
    <text evidence="1">Belongs to the MecA family.</text>
</comment>
<protein>
    <recommendedName>
        <fullName evidence="1">Adapter protein MecA</fullName>
    </recommendedName>
</protein>
<sequence length="218" mass="25674">MKIERINDNTVKFFITYVDIEKRGFARDEIWYNRERGEQLFWQMMDEAHEREDISFDGPLWIQVQAFEKGLEVTVTIAKNVMDTEDDSELGSLLRSAIDEARDQQSVLDQLSELDELEAEADAWAPLAMETNDFEAIISLSKRTGDMFSDLDLKLYHYQDRYYLWIDFPDEMEPEDEENALSLLAEYLTFSTQTQPMLEEYGKLILDGDVFAKVRHYF</sequence>